<comment type="function">
    <text evidence="1">Photosystem II (PSII) is a light-driven water:plastoquinone oxidoreductase that uses light energy to abstract electrons from H(2)O, generating O(2) and a proton gradient subsequently used for ATP formation. It consists of a core antenna complex that captures photons, and an electron transfer chain that converts photonic excitation into a charge separation. The D1/D2 (PsbA/PsbD) reaction center heterodimer binds P680, the primary electron donor of PSII as well as several subsequent electron acceptors.</text>
</comment>
<comment type="catalytic activity">
    <reaction evidence="1">
        <text>2 a plastoquinone + 4 hnu + 2 H2O = 2 a plastoquinol + O2</text>
        <dbReference type="Rhea" id="RHEA:36359"/>
        <dbReference type="Rhea" id="RHEA-COMP:9561"/>
        <dbReference type="Rhea" id="RHEA-COMP:9562"/>
        <dbReference type="ChEBI" id="CHEBI:15377"/>
        <dbReference type="ChEBI" id="CHEBI:15379"/>
        <dbReference type="ChEBI" id="CHEBI:17757"/>
        <dbReference type="ChEBI" id="CHEBI:30212"/>
        <dbReference type="ChEBI" id="CHEBI:62192"/>
        <dbReference type="EC" id="1.10.3.9"/>
    </reaction>
</comment>
<comment type="cofactor">
    <text evidence="1">The D1/D2 heterodimer binds P680, chlorophylls that are the primary electron donor of PSII, and subsequent electron acceptors. It shares a non-heme iron and each subunit binds pheophytin, quinone, additional chlorophylls, carotenoids and lipids. D1 provides most of the ligands for the Mn4-Ca-O5 cluster of the oxygen-evolving complex (OEC). There is also a Cl(-1) ion associated with D1 and D2, which is required for oxygen evolution. The PSII complex binds additional chlorophylls, carotenoids and specific lipids.</text>
</comment>
<comment type="subunit">
    <text evidence="1">PSII is composed of 1 copy each of membrane proteins PsbA, PsbB, PsbC, PsbD, PsbE, PsbF, PsbH, PsbI, PsbJ, PsbK, PsbL, PsbM, PsbT, PsbX, PsbY, PsbZ, Psb30/Ycf12, at least 3 peripheral proteins of the oxygen-evolving complex and a large number of cofactors. It forms dimeric complexes.</text>
</comment>
<comment type="subcellular location">
    <subcellularLocation>
        <location evidence="1">Plastid</location>
        <location evidence="1">Chloroplast thylakoid membrane</location>
        <topology evidence="1">Multi-pass membrane protein</topology>
    </subcellularLocation>
</comment>
<comment type="PTM">
    <text evidence="1">Tyr-161 forms a radical intermediate that is referred to as redox-active TyrZ, YZ or Y-Z.</text>
</comment>
<comment type="PTM">
    <text evidence="1">C-terminally processed by CTPA; processing is essential to allow assembly of the oxygen-evolving complex and thus photosynthetic growth.</text>
</comment>
<comment type="miscellaneous">
    <text evidence="1">2 of the reaction center chlorophylls (ChlD1 and ChlD2) are entirely coordinated by water.</text>
</comment>
<comment type="miscellaneous">
    <text evidence="1">Herbicides such as atrazine, BNT, diuron or ioxynil bind in the Q(B) binding site and block subsequent electron transfer.</text>
</comment>
<comment type="similarity">
    <text evidence="1">Belongs to the reaction center PufL/M/PsbA/D family.</text>
</comment>
<name>PSBA_CHLSC</name>
<evidence type="ECO:0000255" key="1">
    <source>
        <dbReference type="HAMAP-Rule" id="MF_01379"/>
    </source>
</evidence>
<sequence>MTAILERRETTSLWGRFCNWITSTENRLYIGWFGVLMIPTLLTATSVFIIAFIAAPPVDIDGIREPVSGSLLYGNNIISGAIIPTSAAIGLHFYPIWEAASVDEWLYNGGPYELIVLHFLLGVACYMGREWELSFRLGMRPWIAVAYSAPVAAATAVFLIYPIGQGSFSDGMPLGISGTFNFMIVFQAEHNILMHPFHMLGVAGVFGGSLFSAMHGSLVTSSLIRETTENESANAGYRFGQEEETYNIVAAHGYFGRLIFQYASFNNSRSLHFFLAAWPVVGIWFTALGISTMAFNLNGFNFNQSVVDSQGRVINTWADIINRANLGMEVMHERNAHNFPLDLAAVEAPSING</sequence>
<keyword id="KW-0007">Acetylation</keyword>
<keyword id="KW-0106">Calcium</keyword>
<keyword id="KW-0148">Chlorophyll</keyword>
<keyword id="KW-0150">Chloroplast</keyword>
<keyword id="KW-0157">Chromophore</keyword>
<keyword id="KW-0249">Electron transport</keyword>
<keyword id="KW-0359">Herbicide resistance</keyword>
<keyword id="KW-0408">Iron</keyword>
<keyword id="KW-0460">Magnesium</keyword>
<keyword id="KW-0464">Manganese</keyword>
<keyword id="KW-0472">Membrane</keyword>
<keyword id="KW-0479">Metal-binding</keyword>
<keyword id="KW-0560">Oxidoreductase</keyword>
<keyword id="KW-0597">Phosphoprotein</keyword>
<keyword id="KW-0602">Photosynthesis</keyword>
<keyword id="KW-0604">Photosystem II</keyword>
<keyword id="KW-0934">Plastid</keyword>
<keyword id="KW-0793">Thylakoid</keyword>
<keyword id="KW-0812">Transmembrane</keyword>
<keyword id="KW-1133">Transmembrane helix</keyword>
<keyword id="KW-0813">Transport</keyword>
<reference key="1">
    <citation type="journal article" date="2007" name="Mol. Phylogenet. Evol.">
        <title>Phylogenetic and evolutionary implications of complete chloroplast genome sequences of four early-diverging angiosperms: Buxus (Buxaceae), Chloranthus (Chloranthaceae), Dioscorea (Dioscoreaceae), and Illicium (Schisandraceae).</title>
        <authorList>
            <person name="Hansen D.R."/>
            <person name="Dastidar S.G."/>
            <person name="Cai Z."/>
            <person name="Penaflor C."/>
            <person name="Kuehl J.V."/>
            <person name="Boore J.L."/>
            <person name="Jansen R.K."/>
        </authorList>
    </citation>
    <scope>NUCLEOTIDE SEQUENCE [LARGE SCALE GENOMIC DNA]</scope>
</reference>
<gene>
    <name evidence="1" type="primary">psbA</name>
</gene>
<feature type="initiator methionine" description="Removed" evidence="1">
    <location>
        <position position="1"/>
    </location>
</feature>
<feature type="chain" id="PRO_0000339968" description="Photosystem II protein D1" evidence="1">
    <location>
        <begin position="2"/>
        <end position="344"/>
    </location>
</feature>
<feature type="propeptide" id="PRO_0000339969" evidence="1">
    <location>
        <begin position="345"/>
        <end position="353"/>
    </location>
</feature>
<feature type="transmembrane region" description="Helical" evidence="1">
    <location>
        <begin position="29"/>
        <end position="46"/>
    </location>
</feature>
<feature type="transmembrane region" description="Helical" evidence="1">
    <location>
        <begin position="118"/>
        <end position="133"/>
    </location>
</feature>
<feature type="transmembrane region" description="Helical" evidence="1">
    <location>
        <begin position="142"/>
        <end position="156"/>
    </location>
</feature>
<feature type="transmembrane region" description="Helical" evidence="1">
    <location>
        <begin position="197"/>
        <end position="218"/>
    </location>
</feature>
<feature type="transmembrane region" description="Helical" evidence="1">
    <location>
        <begin position="274"/>
        <end position="288"/>
    </location>
</feature>
<feature type="binding site" description="axial binding residue" evidence="1">
    <location>
        <position position="118"/>
    </location>
    <ligand>
        <name>chlorophyll a</name>
        <dbReference type="ChEBI" id="CHEBI:58416"/>
        <label>ChlzD1</label>
    </ligand>
    <ligandPart>
        <name>Mg</name>
        <dbReference type="ChEBI" id="CHEBI:25107"/>
    </ligandPart>
</feature>
<feature type="binding site" evidence="1">
    <location>
        <position position="126"/>
    </location>
    <ligand>
        <name>pheophytin a</name>
        <dbReference type="ChEBI" id="CHEBI:136840"/>
        <label>D1</label>
    </ligand>
</feature>
<feature type="binding site" evidence="1">
    <location>
        <position position="170"/>
    </location>
    <ligand>
        <name>[CaMn4O5] cluster</name>
        <dbReference type="ChEBI" id="CHEBI:189552"/>
    </ligand>
</feature>
<feature type="binding site" evidence="1">
    <location>
        <position position="189"/>
    </location>
    <ligand>
        <name>[CaMn4O5] cluster</name>
        <dbReference type="ChEBI" id="CHEBI:189552"/>
    </ligand>
</feature>
<feature type="binding site" description="axial binding residue" evidence="1">
    <location>
        <position position="198"/>
    </location>
    <ligand>
        <name>chlorophyll a</name>
        <dbReference type="ChEBI" id="CHEBI:58416"/>
        <label>PD1</label>
    </ligand>
    <ligandPart>
        <name>Mg</name>
        <dbReference type="ChEBI" id="CHEBI:25107"/>
    </ligandPart>
</feature>
<feature type="binding site" evidence="1">
    <location>
        <position position="215"/>
    </location>
    <ligand>
        <name>a quinone</name>
        <dbReference type="ChEBI" id="CHEBI:132124"/>
        <label>B</label>
    </ligand>
</feature>
<feature type="binding site" evidence="1">
    <location>
        <position position="215"/>
    </location>
    <ligand>
        <name>Fe cation</name>
        <dbReference type="ChEBI" id="CHEBI:24875"/>
        <note>ligand shared with heterodimeric partner</note>
    </ligand>
</feature>
<feature type="binding site" evidence="1">
    <location>
        <begin position="264"/>
        <end position="265"/>
    </location>
    <ligand>
        <name>a quinone</name>
        <dbReference type="ChEBI" id="CHEBI:132124"/>
        <label>B</label>
    </ligand>
</feature>
<feature type="binding site" evidence="1">
    <location>
        <position position="272"/>
    </location>
    <ligand>
        <name>Fe cation</name>
        <dbReference type="ChEBI" id="CHEBI:24875"/>
        <note>ligand shared with heterodimeric partner</note>
    </ligand>
</feature>
<feature type="binding site" evidence="1">
    <location>
        <position position="332"/>
    </location>
    <ligand>
        <name>[CaMn4O5] cluster</name>
        <dbReference type="ChEBI" id="CHEBI:189552"/>
    </ligand>
</feature>
<feature type="binding site" evidence="1">
    <location>
        <position position="333"/>
    </location>
    <ligand>
        <name>[CaMn4O5] cluster</name>
        <dbReference type="ChEBI" id="CHEBI:189552"/>
    </ligand>
</feature>
<feature type="binding site" evidence="1">
    <location>
        <position position="342"/>
    </location>
    <ligand>
        <name>[CaMn4O5] cluster</name>
        <dbReference type="ChEBI" id="CHEBI:189552"/>
    </ligand>
</feature>
<feature type="binding site" evidence="1">
    <location>
        <position position="344"/>
    </location>
    <ligand>
        <name>[CaMn4O5] cluster</name>
        <dbReference type="ChEBI" id="CHEBI:189552"/>
    </ligand>
</feature>
<feature type="site" description="Tyrosine radical intermediate" evidence="1">
    <location>
        <position position="161"/>
    </location>
</feature>
<feature type="site" description="Stabilizes free radical intermediate" evidence="1">
    <location>
        <position position="190"/>
    </location>
</feature>
<feature type="site" description="Cleavage; by CTPA" evidence="1">
    <location>
        <begin position="344"/>
        <end position="345"/>
    </location>
</feature>
<feature type="modified residue" description="N-acetylthreonine" evidence="1">
    <location>
        <position position="2"/>
    </location>
</feature>
<feature type="modified residue" description="Phosphothreonine" evidence="1">
    <location>
        <position position="2"/>
    </location>
</feature>
<accession>A6MMA2</accession>
<protein>
    <recommendedName>
        <fullName evidence="1">Photosystem II protein D1</fullName>
        <shortName evidence="1">PSII D1 protein</shortName>
        <ecNumber evidence="1">1.10.3.9</ecNumber>
    </recommendedName>
    <alternativeName>
        <fullName evidence="1">Photosystem II Q(B) protein</fullName>
    </alternativeName>
</protein>
<geneLocation type="chloroplast"/>
<dbReference type="EC" id="1.10.3.9" evidence="1"/>
<dbReference type="EMBL" id="EF380352">
    <property type="protein sequence ID" value="ABQ43240.1"/>
    <property type="molecule type" value="Genomic_DNA"/>
</dbReference>
<dbReference type="RefSeq" id="YP_001294078.1">
    <property type="nucleotide sequence ID" value="NC_009598.1"/>
</dbReference>
<dbReference type="SMR" id="A6MMA2"/>
<dbReference type="GeneID" id="5236529"/>
<dbReference type="GO" id="GO:0009535">
    <property type="term" value="C:chloroplast thylakoid membrane"/>
    <property type="evidence" value="ECO:0007669"/>
    <property type="project" value="UniProtKB-SubCell"/>
</dbReference>
<dbReference type="GO" id="GO:0009523">
    <property type="term" value="C:photosystem II"/>
    <property type="evidence" value="ECO:0007669"/>
    <property type="project" value="UniProtKB-KW"/>
</dbReference>
<dbReference type="GO" id="GO:0016168">
    <property type="term" value="F:chlorophyll binding"/>
    <property type="evidence" value="ECO:0007669"/>
    <property type="project" value="UniProtKB-UniRule"/>
</dbReference>
<dbReference type="GO" id="GO:0045156">
    <property type="term" value="F:electron transporter, transferring electrons within the cyclic electron transport pathway of photosynthesis activity"/>
    <property type="evidence" value="ECO:0007669"/>
    <property type="project" value="InterPro"/>
</dbReference>
<dbReference type="GO" id="GO:0005506">
    <property type="term" value="F:iron ion binding"/>
    <property type="evidence" value="ECO:0007669"/>
    <property type="project" value="UniProtKB-UniRule"/>
</dbReference>
<dbReference type="GO" id="GO:0016682">
    <property type="term" value="F:oxidoreductase activity, acting on diphenols and related substances as donors, oxygen as acceptor"/>
    <property type="evidence" value="ECO:0007669"/>
    <property type="project" value="UniProtKB-UniRule"/>
</dbReference>
<dbReference type="GO" id="GO:0010242">
    <property type="term" value="F:oxygen evolving activity"/>
    <property type="evidence" value="ECO:0007669"/>
    <property type="project" value="UniProtKB-EC"/>
</dbReference>
<dbReference type="GO" id="GO:0009772">
    <property type="term" value="P:photosynthetic electron transport in photosystem II"/>
    <property type="evidence" value="ECO:0007669"/>
    <property type="project" value="InterPro"/>
</dbReference>
<dbReference type="GO" id="GO:0009635">
    <property type="term" value="P:response to herbicide"/>
    <property type="evidence" value="ECO:0007669"/>
    <property type="project" value="UniProtKB-KW"/>
</dbReference>
<dbReference type="CDD" id="cd09289">
    <property type="entry name" value="Photosystem-II_D1"/>
    <property type="match status" value="1"/>
</dbReference>
<dbReference type="FunFam" id="1.20.85.10:FF:000002">
    <property type="entry name" value="Photosystem II protein D1"/>
    <property type="match status" value="1"/>
</dbReference>
<dbReference type="Gene3D" id="1.20.85.10">
    <property type="entry name" value="Photosystem II protein D1-like"/>
    <property type="match status" value="1"/>
</dbReference>
<dbReference type="HAMAP" id="MF_01379">
    <property type="entry name" value="PSII_PsbA_D1"/>
    <property type="match status" value="1"/>
</dbReference>
<dbReference type="InterPro" id="IPR055266">
    <property type="entry name" value="D1/D2"/>
</dbReference>
<dbReference type="InterPro" id="IPR036854">
    <property type="entry name" value="Photo_II_D1/D2_sf"/>
</dbReference>
<dbReference type="InterPro" id="IPR000484">
    <property type="entry name" value="Photo_RC_L/M"/>
</dbReference>
<dbReference type="InterPro" id="IPR055265">
    <property type="entry name" value="Photo_RC_L/M_CS"/>
</dbReference>
<dbReference type="InterPro" id="IPR005867">
    <property type="entry name" value="PSII_D1"/>
</dbReference>
<dbReference type="NCBIfam" id="TIGR01151">
    <property type="entry name" value="psbA"/>
    <property type="match status" value="1"/>
</dbReference>
<dbReference type="PANTHER" id="PTHR33149:SF12">
    <property type="entry name" value="PHOTOSYSTEM II D2 PROTEIN"/>
    <property type="match status" value="1"/>
</dbReference>
<dbReference type="PANTHER" id="PTHR33149">
    <property type="entry name" value="PHOTOSYSTEM II PROTEIN D1"/>
    <property type="match status" value="1"/>
</dbReference>
<dbReference type="Pfam" id="PF00124">
    <property type="entry name" value="Photo_RC"/>
    <property type="match status" value="1"/>
</dbReference>
<dbReference type="PRINTS" id="PR00256">
    <property type="entry name" value="REACTNCENTRE"/>
</dbReference>
<dbReference type="SUPFAM" id="SSF81483">
    <property type="entry name" value="Bacterial photosystem II reaction centre, L and M subunits"/>
    <property type="match status" value="1"/>
</dbReference>
<dbReference type="PROSITE" id="PS00244">
    <property type="entry name" value="REACTION_CENTER"/>
    <property type="match status" value="1"/>
</dbReference>
<organism>
    <name type="scientific">Chloranthus spicatus</name>
    <name type="common">Chulantree</name>
    <name type="synonym">Nigrina spicata</name>
    <dbReference type="NCBI Taxonomy" id="13006"/>
    <lineage>
        <taxon>Eukaryota</taxon>
        <taxon>Viridiplantae</taxon>
        <taxon>Streptophyta</taxon>
        <taxon>Embryophyta</taxon>
        <taxon>Tracheophyta</taxon>
        <taxon>Spermatophyta</taxon>
        <taxon>Magnoliopsida</taxon>
        <taxon>Chloranthales</taxon>
        <taxon>Chloranthaceae</taxon>
        <taxon>Chloranthus</taxon>
    </lineage>
</organism>
<proteinExistence type="inferred from homology"/>